<evidence type="ECO:0000255" key="1">
    <source>
        <dbReference type="HAMAP-Rule" id="MF_01864"/>
    </source>
</evidence>
<evidence type="ECO:0000255" key="2">
    <source>
        <dbReference type="PROSITE-ProRule" id="PRU01266"/>
    </source>
</evidence>
<reference key="1">
    <citation type="submission" date="2005-11" db="EMBL/GenBank/DDBJ databases">
        <title>The complete genome sequence of Lawsonia intracellularis: the causative agent of proliferative enteropathy.</title>
        <authorList>
            <person name="Kaur K."/>
            <person name="Zhang Q."/>
            <person name="Beckler D."/>
            <person name="Munir S."/>
            <person name="Li L."/>
            <person name="Kinsley K."/>
            <person name="Herron L."/>
            <person name="Peterson A."/>
            <person name="May B."/>
            <person name="Singh S."/>
            <person name="Gebhart C."/>
            <person name="Kapur V."/>
        </authorList>
    </citation>
    <scope>NUCLEOTIDE SEQUENCE [LARGE SCALE GENOMIC DNA]</scope>
    <source>
        <strain>PHE/MN1-00</strain>
    </source>
</reference>
<comment type="function">
    <text evidence="1">Catalyzes the methylthiolation of N6-(dimethylallyl)adenosine (i(6)A), leading to the formation of 2-methylthio-N6-(dimethylallyl)adenosine (ms(2)i(6)A) at position 37 in tRNAs that read codons beginning with uridine.</text>
</comment>
<comment type="catalytic activity">
    <reaction evidence="1">
        <text>N(6)-dimethylallyladenosine(37) in tRNA + (sulfur carrier)-SH + AH2 + 2 S-adenosyl-L-methionine = 2-methylsulfanyl-N(6)-dimethylallyladenosine(37) in tRNA + (sulfur carrier)-H + 5'-deoxyadenosine + L-methionine + A + S-adenosyl-L-homocysteine + 2 H(+)</text>
        <dbReference type="Rhea" id="RHEA:37067"/>
        <dbReference type="Rhea" id="RHEA-COMP:10375"/>
        <dbReference type="Rhea" id="RHEA-COMP:10376"/>
        <dbReference type="Rhea" id="RHEA-COMP:14737"/>
        <dbReference type="Rhea" id="RHEA-COMP:14739"/>
        <dbReference type="ChEBI" id="CHEBI:13193"/>
        <dbReference type="ChEBI" id="CHEBI:15378"/>
        <dbReference type="ChEBI" id="CHEBI:17319"/>
        <dbReference type="ChEBI" id="CHEBI:17499"/>
        <dbReference type="ChEBI" id="CHEBI:29917"/>
        <dbReference type="ChEBI" id="CHEBI:57844"/>
        <dbReference type="ChEBI" id="CHEBI:57856"/>
        <dbReference type="ChEBI" id="CHEBI:59789"/>
        <dbReference type="ChEBI" id="CHEBI:64428"/>
        <dbReference type="ChEBI" id="CHEBI:74415"/>
        <dbReference type="ChEBI" id="CHEBI:74417"/>
        <dbReference type="EC" id="2.8.4.3"/>
    </reaction>
</comment>
<comment type="cofactor">
    <cofactor evidence="1">
        <name>[4Fe-4S] cluster</name>
        <dbReference type="ChEBI" id="CHEBI:49883"/>
    </cofactor>
    <text evidence="1">Binds 2 [4Fe-4S] clusters. One cluster is coordinated with 3 cysteines and an exchangeable S-adenosyl-L-methionine.</text>
</comment>
<comment type="subunit">
    <text evidence="1">Monomer.</text>
</comment>
<comment type="subcellular location">
    <subcellularLocation>
        <location evidence="1">Cytoplasm</location>
    </subcellularLocation>
</comment>
<comment type="similarity">
    <text evidence="1">Belongs to the methylthiotransferase family. MiaB subfamily.</text>
</comment>
<keyword id="KW-0004">4Fe-4S</keyword>
<keyword id="KW-0963">Cytoplasm</keyword>
<keyword id="KW-0408">Iron</keyword>
<keyword id="KW-0411">Iron-sulfur</keyword>
<keyword id="KW-0479">Metal-binding</keyword>
<keyword id="KW-1185">Reference proteome</keyword>
<keyword id="KW-0949">S-adenosyl-L-methionine</keyword>
<keyword id="KW-0808">Transferase</keyword>
<keyword id="KW-0819">tRNA processing</keyword>
<proteinExistence type="inferred from homology"/>
<gene>
    <name evidence="1" type="primary">miaB</name>
    <name type="ordered locus">LI0821</name>
</gene>
<feature type="chain" id="PRO_0000374352" description="tRNA-2-methylthio-N(6)-dimethylallyladenosine synthase">
    <location>
        <begin position="1"/>
        <end position="457"/>
    </location>
</feature>
<feature type="domain" description="MTTase N-terminal" evidence="1">
    <location>
        <begin position="4"/>
        <end position="119"/>
    </location>
</feature>
<feature type="domain" description="Radical SAM core" evidence="2">
    <location>
        <begin position="150"/>
        <end position="385"/>
    </location>
</feature>
<feature type="domain" description="TRAM" evidence="1">
    <location>
        <begin position="388"/>
        <end position="456"/>
    </location>
</feature>
<feature type="binding site" evidence="1">
    <location>
        <position position="13"/>
    </location>
    <ligand>
        <name>[4Fe-4S] cluster</name>
        <dbReference type="ChEBI" id="CHEBI:49883"/>
        <label>1</label>
    </ligand>
</feature>
<feature type="binding site" evidence="1">
    <location>
        <position position="48"/>
    </location>
    <ligand>
        <name>[4Fe-4S] cluster</name>
        <dbReference type="ChEBI" id="CHEBI:49883"/>
        <label>1</label>
    </ligand>
</feature>
<feature type="binding site" evidence="1">
    <location>
        <position position="82"/>
    </location>
    <ligand>
        <name>[4Fe-4S] cluster</name>
        <dbReference type="ChEBI" id="CHEBI:49883"/>
        <label>1</label>
    </ligand>
</feature>
<feature type="binding site" evidence="1">
    <location>
        <position position="164"/>
    </location>
    <ligand>
        <name>[4Fe-4S] cluster</name>
        <dbReference type="ChEBI" id="CHEBI:49883"/>
        <label>2</label>
        <note>4Fe-4S-S-AdoMet</note>
    </ligand>
</feature>
<feature type="binding site" evidence="1">
    <location>
        <position position="168"/>
    </location>
    <ligand>
        <name>[4Fe-4S] cluster</name>
        <dbReference type="ChEBI" id="CHEBI:49883"/>
        <label>2</label>
        <note>4Fe-4S-S-AdoMet</note>
    </ligand>
</feature>
<feature type="binding site" evidence="1">
    <location>
        <position position="171"/>
    </location>
    <ligand>
        <name>[4Fe-4S] cluster</name>
        <dbReference type="ChEBI" id="CHEBI:49883"/>
        <label>2</label>
        <note>4Fe-4S-S-AdoMet</note>
    </ligand>
</feature>
<organism>
    <name type="scientific">Lawsonia intracellularis (strain PHE/MN1-00)</name>
    <dbReference type="NCBI Taxonomy" id="363253"/>
    <lineage>
        <taxon>Bacteria</taxon>
        <taxon>Pseudomonadati</taxon>
        <taxon>Thermodesulfobacteriota</taxon>
        <taxon>Desulfovibrionia</taxon>
        <taxon>Desulfovibrionales</taxon>
        <taxon>Desulfovibrionaceae</taxon>
        <taxon>Lawsonia</taxon>
    </lineage>
</organism>
<accession>Q1MQ52</accession>
<sequence>MLQRNFHIITFGCQMNTNDSFWLSCSLQKKGFQEVSLEDASIIIINTCSVREKPEQKVYSILGKIRHATKNNPDSFVVIAGCVAQQLGATFFEKFPQVRLVSGSDGIAMAPDAIERLYAEPDLKLNLTDFSEYYPEREYAFSKLTLSNNNTLALMAYVNIMQGCDNYCTYCIVPYTRGKQKSRSVQAIVEECQQLIDSGVKEIVLLGQNVNAYGLDKDKNSPANGVNFAMLVHTIASLPGLERLRFFSAHPKEFSSELIDLFGEFSTLCPRLHLPLQSGSDKILRRMGRKYSMDEYISIITKLKKVRPDIALSTDFIVGFPGETEEDFLQTLQSINTIKFMSSFSFCYSDRPGTRSSTFSNKVDHEVKIKRLEQLQATQLEHSTSWLKSRVGVETTVLLEKVSRKKAEDNNSWQGRDPWGNVVNVILPQSTNISNTLLPVRIIASKKHSLVAEPLII</sequence>
<protein>
    <recommendedName>
        <fullName evidence="1">tRNA-2-methylthio-N(6)-dimethylallyladenosine synthase</fullName>
        <ecNumber evidence="1">2.8.4.3</ecNumber>
    </recommendedName>
    <alternativeName>
        <fullName evidence="1">(Dimethylallyl)adenosine tRNA methylthiotransferase MiaB</fullName>
    </alternativeName>
    <alternativeName>
        <fullName evidence="1">tRNA-i(6)A37 methylthiotransferase</fullName>
    </alternativeName>
</protein>
<name>MIAB_LAWIP</name>
<dbReference type="EC" id="2.8.4.3" evidence="1"/>
<dbReference type="EMBL" id="AM180252">
    <property type="protein sequence ID" value="CAJ54875.1"/>
    <property type="molecule type" value="Genomic_DNA"/>
</dbReference>
<dbReference type="RefSeq" id="WP_011526904.1">
    <property type="nucleotide sequence ID" value="NC_008011.1"/>
</dbReference>
<dbReference type="SMR" id="Q1MQ52"/>
<dbReference type="STRING" id="363253.LI0821"/>
<dbReference type="KEGG" id="lip:LI0821"/>
<dbReference type="eggNOG" id="COG0621">
    <property type="taxonomic scope" value="Bacteria"/>
</dbReference>
<dbReference type="HOGENOM" id="CLU_018697_2_0_7"/>
<dbReference type="OrthoDB" id="9805215at2"/>
<dbReference type="Proteomes" id="UP000002430">
    <property type="component" value="Chromosome"/>
</dbReference>
<dbReference type="GO" id="GO:0005829">
    <property type="term" value="C:cytosol"/>
    <property type="evidence" value="ECO:0007669"/>
    <property type="project" value="TreeGrafter"/>
</dbReference>
<dbReference type="GO" id="GO:0051539">
    <property type="term" value="F:4 iron, 4 sulfur cluster binding"/>
    <property type="evidence" value="ECO:0007669"/>
    <property type="project" value="UniProtKB-UniRule"/>
</dbReference>
<dbReference type="GO" id="GO:0046872">
    <property type="term" value="F:metal ion binding"/>
    <property type="evidence" value="ECO:0007669"/>
    <property type="project" value="UniProtKB-KW"/>
</dbReference>
<dbReference type="GO" id="GO:0035597">
    <property type="term" value="F:N6-isopentenyladenosine methylthiotransferase activity"/>
    <property type="evidence" value="ECO:0007669"/>
    <property type="project" value="TreeGrafter"/>
</dbReference>
<dbReference type="CDD" id="cd01335">
    <property type="entry name" value="Radical_SAM"/>
    <property type="match status" value="1"/>
</dbReference>
<dbReference type="FunFam" id="3.40.50.12160:FF:000003">
    <property type="entry name" value="CDK5 regulatory subunit-associated protein 1"/>
    <property type="match status" value="1"/>
</dbReference>
<dbReference type="FunFam" id="3.80.30.20:FF:000001">
    <property type="entry name" value="tRNA-2-methylthio-N(6)-dimethylallyladenosine synthase 2"/>
    <property type="match status" value="1"/>
</dbReference>
<dbReference type="Gene3D" id="3.40.50.12160">
    <property type="entry name" value="Methylthiotransferase, N-terminal domain"/>
    <property type="match status" value="1"/>
</dbReference>
<dbReference type="Gene3D" id="3.80.30.20">
    <property type="entry name" value="tm_1862 like domain"/>
    <property type="match status" value="1"/>
</dbReference>
<dbReference type="HAMAP" id="MF_01864">
    <property type="entry name" value="tRNA_metthiotr_MiaB"/>
    <property type="match status" value="1"/>
</dbReference>
<dbReference type="InterPro" id="IPR006638">
    <property type="entry name" value="Elp3/MiaA/NifB-like_rSAM"/>
</dbReference>
<dbReference type="InterPro" id="IPR005839">
    <property type="entry name" value="Methylthiotransferase"/>
</dbReference>
<dbReference type="InterPro" id="IPR020612">
    <property type="entry name" value="Methylthiotransferase_CS"/>
</dbReference>
<dbReference type="InterPro" id="IPR013848">
    <property type="entry name" value="Methylthiotransferase_N"/>
</dbReference>
<dbReference type="InterPro" id="IPR038135">
    <property type="entry name" value="Methylthiotransferase_N_sf"/>
</dbReference>
<dbReference type="InterPro" id="IPR006463">
    <property type="entry name" value="MiaB_methiolase"/>
</dbReference>
<dbReference type="InterPro" id="IPR007197">
    <property type="entry name" value="rSAM"/>
</dbReference>
<dbReference type="InterPro" id="IPR023404">
    <property type="entry name" value="rSAM_horseshoe"/>
</dbReference>
<dbReference type="NCBIfam" id="TIGR01574">
    <property type="entry name" value="miaB-methiolase"/>
    <property type="match status" value="1"/>
</dbReference>
<dbReference type="NCBIfam" id="TIGR00089">
    <property type="entry name" value="MiaB/RimO family radical SAM methylthiotransferase"/>
    <property type="match status" value="1"/>
</dbReference>
<dbReference type="PANTHER" id="PTHR43020">
    <property type="entry name" value="CDK5 REGULATORY SUBUNIT-ASSOCIATED PROTEIN 1"/>
    <property type="match status" value="1"/>
</dbReference>
<dbReference type="PANTHER" id="PTHR43020:SF2">
    <property type="entry name" value="MITOCHONDRIAL TRNA METHYLTHIOTRANSFERASE CDK5RAP1"/>
    <property type="match status" value="1"/>
</dbReference>
<dbReference type="Pfam" id="PF04055">
    <property type="entry name" value="Radical_SAM"/>
    <property type="match status" value="1"/>
</dbReference>
<dbReference type="Pfam" id="PF00919">
    <property type="entry name" value="UPF0004"/>
    <property type="match status" value="1"/>
</dbReference>
<dbReference type="SFLD" id="SFLDF00273">
    <property type="entry name" value="(dimethylallyl)adenosine_tRNA"/>
    <property type="match status" value="1"/>
</dbReference>
<dbReference type="SFLD" id="SFLDG01082">
    <property type="entry name" value="B12-binding_domain_containing"/>
    <property type="match status" value="1"/>
</dbReference>
<dbReference type="SFLD" id="SFLDS00029">
    <property type="entry name" value="Radical_SAM"/>
    <property type="match status" value="1"/>
</dbReference>
<dbReference type="SMART" id="SM00729">
    <property type="entry name" value="Elp3"/>
    <property type="match status" value="1"/>
</dbReference>
<dbReference type="SUPFAM" id="SSF102114">
    <property type="entry name" value="Radical SAM enzymes"/>
    <property type="match status" value="1"/>
</dbReference>
<dbReference type="PROSITE" id="PS51449">
    <property type="entry name" value="MTTASE_N"/>
    <property type="match status" value="1"/>
</dbReference>
<dbReference type="PROSITE" id="PS01278">
    <property type="entry name" value="MTTASE_RADICAL"/>
    <property type="match status" value="1"/>
</dbReference>
<dbReference type="PROSITE" id="PS51918">
    <property type="entry name" value="RADICAL_SAM"/>
    <property type="match status" value="1"/>
</dbReference>